<gene>
    <name evidence="1" type="primary">arnA</name>
    <name type="ordered locus">YPN_1874</name>
    <name type="ORF">YP516_2085</name>
</gene>
<name>ARNA_YERPN</name>
<feature type="chain" id="PRO_0000281734" description="Bifunctional polymyxin resistance protein ArnA">
    <location>
        <begin position="1"/>
        <end position="667"/>
    </location>
</feature>
<feature type="region of interest" description="Formyltransferase ArnAFT">
    <location>
        <begin position="1"/>
        <end position="304"/>
    </location>
</feature>
<feature type="region of interest" description="Dehydrogenase ArnADH">
    <location>
        <begin position="314"/>
        <end position="667"/>
    </location>
</feature>
<feature type="active site" description="Proton donor; for formyltransferase activity" evidence="1">
    <location>
        <position position="104"/>
    </location>
</feature>
<feature type="active site" description="Proton acceptor; for decarboxylase activity" evidence="1">
    <location>
        <position position="434"/>
    </location>
</feature>
<feature type="active site" description="Proton donor; for decarboxylase activity" evidence="1">
    <location>
        <position position="619"/>
    </location>
</feature>
<feature type="binding site" evidence="1">
    <location>
        <position position="114"/>
    </location>
    <ligand>
        <name>(6R)-10-formyltetrahydrofolate</name>
        <dbReference type="ChEBI" id="CHEBI:195366"/>
    </ligand>
</feature>
<feature type="binding site" evidence="1">
    <location>
        <begin position="136"/>
        <end position="140"/>
    </location>
    <ligand>
        <name>(6R)-10-formyltetrahydrofolate</name>
        <dbReference type="ChEBI" id="CHEBI:195366"/>
    </ligand>
</feature>
<feature type="binding site" evidence="1">
    <location>
        <position position="347"/>
    </location>
    <ligand>
        <name>NAD(+)</name>
        <dbReference type="ChEBI" id="CHEBI:57540"/>
    </ligand>
</feature>
<feature type="binding site" evidence="1">
    <location>
        <begin position="368"/>
        <end position="369"/>
    </location>
    <ligand>
        <name>NAD(+)</name>
        <dbReference type="ChEBI" id="CHEBI:57540"/>
    </ligand>
</feature>
<feature type="binding site" evidence="1">
    <location>
        <position position="393"/>
    </location>
    <ligand>
        <name>UDP-alpha-D-glucuronate</name>
        <dbReference type="ChEBI" id="CHEBI:58052"/>
    </ligand>
</feature>
<feature type="binding site" evidence="1">
    <location>
        <position position="398"/>
    </location>
    <ligand>
        <name>UDP-alpha-D-glucuronate</name>
        <dbReference type="ChEBI" id="CHEBI:58052"/>
    </ligand>
</feature>
<feature type="binding site" evidence="1">
    <location>
        <begin position="432"/>
        <end position="433"/>
    </location>
    <ligand>
        <name>UDP-alpha-D-glucuronate</name>
        <dbReference type="ChEBI" id="CHEBI:58052"/>
    </ligand>
</feature>
<feature type="binding site" evidence="1">
    <location>
        <position position="460"/>
    </location>
    <ligand>
        <name>UDP-alpha-D-glucuronate</name>
        <dbReference type="ChEBI" id="CHEBI:58052"/>
    </ligand>
</feature>
<feature type="binding site" evidence="1">
    <location>
        <position position="492"/>
    </location>
    <ligand>
        <name>UDP-alpha-D-glucuronate</name>
        <dbReference type="ChEBI" id="CHEBI:58052"/>
    </ligand>
</feature>
<feature type="binding site" evidence="1">
    <location>
        <begin position="526"/>
        <end position="535"/>
    </location>
    <ligand>
        <name>UDP-alpha-D-glucuronate</name>
        <dbReference type="ChEBI" id="CHEBI:58052"/>
    </ligand>
</feature>
<feature type="binding site" evidence="1">
    <location>
        <position position="613"/>
    </location>
    <ligand>
        <name>UDP-alpha-D-glucuronate</name>
        <dbReference type="ChEBI" id="CHEBI:58052"/>
    </ligand>
</feature>
<feature type="site" description="Transition state stabilizer" evidence="1">
    <location>
        <position position="102"/>
    </location>
</feature>
<feature type="site" description="Raises pKa of active site His" evidence="1">
    <location>
        <position position="140"/>
    </location>
</feature>
<organism>
    <name type="scientific">Yersinia pestis bv. Antiqua (strain Nepal516)</name>
    <dbReference type="NCBI Taxonomy" id="377628"/>
    <lineage>
        <taxon>Bacteria</taxon>
        <taxon>Pseudomonadati</taxon>
        <taxon>Pseudomonadota</taxon>
        <taxon>Gammaproteobacteria</taxon>
        <taxon>Enterobacterales</taxon>
        <taxon>Yersiniaceae</taxon>
        <taxon>Yersinia</taxon>
    </lineage>
</organism>
<sequence length="667" mass="74921">MKAIVFAYHDIGCVGLNALAEAGYDIQAVFTHTDNPGENRFFSSVARVAADLALPVFAPEDVNHPLWVERIRELQPDIIFSFYYRNMLSDEILSLAPQGGFNLHGSLLPQYRGRAPINWVLVNGETETGVTLHQMVKKADAGPIAGQYKVAISDVDTALTLHAKMRDAAQELLRNLLPRMKEGPLPLTPQKEADASYFGRRTAADGEIHWQKSAFTINNLVRAVTEPYPGAFSYLGQRKLTIWRSRPLDLVHNKLPGTVLSTAPLTVACGEGALEIITGQGEAGLYVQGDRLAQEMGIVTDVRLGNKPSNTLKRRTRVLILGVNGFIGNHLTERLLQDDRYEVYGLDIGSDAISRFLGNPAFHFVEGDISIHSEWIEYHIKKCDVILPLVAIATPIEYTRNPLRVFELDFEENLKIVRDCVKYNKRIVFPSTSEVYGMCDDKEFDEDTSRLIVGPINKQRWIYSVSKQLLDRVIWAYGVKEGLKFTLFRPFNWMGPRLDNLDAARIGSSRAITQLILNLVEGSPIKLVDGGAQKRCFTDIHDGIEALFRIIENRDGCCDGRIINIGNPTNEASIRELAEMLLTSFENHELRDHFPPFAGFKDIESSAYYGKGYQDVEYRTPSIKNARRILHWQPEIAMQQTVTETLDFFLRAAVIEKTAAPKDELNA</sequence>
<keyword id="KW-0046">Antibiotic resistance</keyword>
<keyword id="KW-0441">Lipid A biosynthesis</keyword>
<keyword id="KW-0444">Lipid biosynthesis</keyword>
<keyword id="KW-0443">Lipid metabolism</keyword>
<keyword id="KW-0448">Lipopolysaccharide biosynthesis</keyword>
<keyword id="KW-0511">Multifunctional enzyme</keyword>
<keyword id="KW-0520">NAD</keyword>
<keyword id="KW-0560">Oxidoreductase</keyword>
<keyword id="KW-0808">Transferase</keyword>
<evidence type="ECO:0000255" key="1">
    <source>
        <dbReference type="HAMAP-Rule" id="MF_01166"/>
    </source>
</evidence>
<accession>Q1CIH7</accession>
<accession>C4GTH7</accession>
<comment type="function">
    <text evidence="1">Bifunctional enzyme that catalyzes the oxidative decarboxylation of UDP-glucuronic acid (UDP-GlcUA) to UDP-4-keto-arabinose (UDP-Ara4O) and the addition of a formyl group to UDP-4-amino-4-deoxy-L-arabinose (UDP-L-Ara4N) to form UDP-L-4-formamido-arabinose (UDP-L-Ara4FN). The modified arabinose is attached to lipid A and is required for resistance to polymyxin and cationic antimicrobial peptides.</text>
</comment>
<comment type="catalytic activity">
    <reaction evidence="1">
        <text>UDP-alpha-D-glucuronate + NAD(+) = UDP-beta-L-threo-pentopyranos-4-ulose + CO2 + NADH</text>
        <dbReference type="Rhea" id="RHEA:24702"/>
        <dbReference type="ChEBI" id="CHEBI:16526"/>
        <dbReference type="ChEBI" id="CHEBI:57540"/>
        <dbReference type="ChEBI" id="CHEBI:57945"/>
        <dbReference type="ChEBI" id="CHEBI:58052"/>
        <dbReference type="ChEBI" id="CHEBI:58710"/>
        <dbReference type="EC" id="1.1.1.305"/>
    </reaction>
</comment>
<comment type="catalytic activity">
    <reaction evidence="1">
        <text>UDP-4-amino-4-deoxy-beta-L-arabinose + (6R)-10-formyltetrahydrofolate = UDP-4-deoxy-4-formamido-beta-L-arabinose + (6S)-5,6,7,8-tetrahydrofolate + H(+)</text>
        <dbReference type="Rhea" id="RHEA:24706"/>
        <dbReference type="ChEBI" id="CHEBI:15378"/>
        <dbReference type="ChEBI" id="CHEBI:57453"/>
        <dbReference type="ChEBI" id="CHEBI:58708"/>
        <dbReference type="ChEBI" id="CHEBI:58709"/>
        <dbReference type="ChEBI" id="CHEBI:195366"/>
        <dbReference type="EC" id="2.1.2.13"/>
    </reaction>
</comment>
<comment type="pathway">
    <text evidence="1">Nucleotide-sugar biosynthesis; UDP-4-deoxy-4-formamido-beta-L-arabinose biosynthesis; UDP-4-deoxy-4-formamido-beta-L-arabinose from UDP-alpha-D-glucuronate: step 1/3.</text>
</comment>
<comment type="pathway">
    <text evidence="1">Nucleotide-sugar biosynthesis; UDP-4-deoxy-4-formamido-beta-L-arabinose biosynthesis; UDP-4-deoxy-4-formamido-beta-L-arabinose from UDP-alpha-D-glucuronate: step 3/3.</text>
</comment>
<comment type="pathway">
    <text evidence="1">Bacterial outer membrane biogenesis; lipopolysaccharide biosynthesis.</text>
</comment>
<comment type="subunit">
    <text evidence="1">Homohexamer, formed by a dimer of trimers.</text>
</comment>
<comment type="similarity">
    <text evidence="1">In the N-terminal section; belongs to the Fmt family. UDP-L-Ara4N formyltransferase subfamily.</text>
</comment>
<comment type="similarity">
    <text evidence="1">In the C-terminal section; belongs to the NAD(P)-dependent epimerase/dehydratase family. UDP-glucuronic acid decarboxylase subfamily.</text>
</comment>
<protein>
    <recommendedName>
        <fullName evidence="1">Bifunctional polymyxin resistance protein ArnA</fullName>
    </recommendedName>
    <domain>
        <recommendedName>
            <fullName evidence="1">UDP-4-amino-4-deoxy-L-arabinose formyltransferase</fullName>
            <ecNumber evidence="1">2.1.2.13</ecNumber>
        </recommendedName>
        <alternativeName>
            <fullName evidence="1">ArnAFT</fullName>
        </alternativeName>
        <alternativeName>
            <fullName evidence="1">UDP-L-Ara4N formyltransferase</fullName>
        </alternativeName>
    </domain>
    <domain>
        <recommendedName>
            <fullName evidence="1">UDP-glucuronic acid oxidase, UDP-4-keto-hexauronic acid decarboxylating</fullName>
            <ecNumber evidence="1">1.1.1.305</ecNumber>
        </recommendedName>
        <alternativeName>
            <fullName evidence="1">ArnADH</fullName>
        </alternativeName>
        <alternativeName>
            <fullName evidence="1">UDP-GlcUA decarboxylase</fullName>
        </alternativeName>
        <alternativeName>
            <fullName evidence="1">UDP-glucuronic acid dehydrogenase</fullName>
        </alternativeName>
    </domain>
</protein>
<dbReference type="EC" id="2.1.2.13" evidence="1"/>
<dbReference type="EC" id="1.1.1.305" evidence="1"/>
<dbReference type="EMBL" id="CP000305">
    <property type="protein sequence ID" value="ABG18203.1"/>
    <property type="molecule type" value="Genomic_DNA"/>
</dbReference>
<dbReference type="EMBL" id="ACNQ01000010">
    <property type="protein sequence ID" value="EEO76778.1"/>
    <property type="molecule type" value="Genomic_DNA"/>
</dbReference>
<dbReference type="RefSeq" id="WP_002211823.1">
    <property type="nucleotide sequence ID" value="NZ_ACNQ01000010.1"/>
</dbReference>
<dbReference type="SMR" id="Q1CIH7"/>
<dbReference type="GeneID" id="57976257"/>
<dbReference type="KEGG" id="ypn:YPN_1874"/>
<dbReference type="HOGENOM" id="CLU_007383_23_2_6"/>
<dbReference type="UniPathway" id="UPA00030"/>
<dbReference type="UniPathway" id="UPA00032">
    <property type="reaction ID" value="UER00492"/>
</dbReference>
<dbReference type="UniPathway" id="UPA00032">
    <property type="reaction ID" value="UER00494"/>
</dbReference>
<dbReference type="Proteomes" id="UP000008936">
    <property type="component" value="Chromosome"/>
</dbReference>
<dbReference type="GO" id="GO:0016020">
    <property type="term" value="C:membrane"/>
    <property type="evidence" value="ECO:0007669"/>
    <property type="project" value="GOC"/>
</dbReference>
<dbReference type="GO" id="GO:0016831">
    <property type="term" value="F:carboxy-lyase activity"/>
    <property type="evidence" value="ECO:0007669"/>
    <property type="project" value="InterPro"/>
</dbReference>
<dbReference type="GO" id="GO:0099619">
    <property type="term" value="F:UDP-4-amino-4-deoxy-L-arabinose formyltransferase activity"/>
    <property type="evidence" value="ECO:0007669"/>
    <property type="project" value="UniProtKB-EC"/>
</dbReference>
<dbReference type="GO" id="GO:0099618">
    <property type="term" value="F:UDP-glucuronate dehydrogenase activity"/>
    <property type="evidence" value="ECO:0007669"/>
    <property type="project" value="UniProtKB-EC"/>
</dbReference>
<dbReference type="GO" id="GO:0009245">
    <property type="term" value="P:lipid A biosynthetic process"/>
    <property type="evidence" value="ECO:0007669"/>
    <property type="project" value="UniProtKB-KW"/>
</dbReference>
<dbReference type="GO" id="GO:0009103">
    <property type="term" value="P:lipopolysaccharide biosynthetic process"/>
    <property type="evidence" value="ECO:0007669"/>
    <property type="project" value="UniProtKB-UniRule"/>
</dbReference>
<dbReference type="GO" id="GO:0046677">
    <property type="term" value="P:response to antibiotic"/>
    <property type="evidence" value="ECO:0007669"/>
    <property type="project" value="UniProtKB-KW"/>
</dbReference>
<dbReference type="CDD" id="cd08702">
    <property type="entry name" value="Arna_FMT_C"/>
    <property type="match status" value="1"/>
</dbReference>
<dbReference type="CDD" id="cd05257">
    <property type="entry name" value="Arna_like_SDR_e"/>
    <property type="match status" value="1"/>
</dbReference>
<dbReference type="FunFam" id="3.40.50.720:FF:000197">
    <property type="entry name" value="Bifunctional polymyxin resistance protein ArnA"/>
    <property type="match status" value="1"/>
</dbReference>
<dbReference type="Gene3D" id="3.40.50.12230">
    <property type="match status" value="1"/>
</dbReference>
<dbReference type="Gene3D" id="3.40.50.720">
    <property type="entry name" value="NAD(P)-binding Rossmann-like Domain"/>
    <property type="match status" value="1"/>
</dbReference>
<dbReference type="HAMAP" id="MF_01166">
    <property type="entry name" value="ArnA"/>
    <property type="match status" value="1"/>
</dbReference>
<dbReference type="InterPro" id="IPR045869">
    <property type="entry name" value="Arna-like_SDR_e"/>
</dbReference>
<dbReference type="InterPro" id="IPR021168">
    <property type="entry name" value="Bifun_polymyxin_resist_ArnA"/>
</dbReference>
<dbReference type="InterPro" id="IPR001509">
    <property type="entry name" value="Epimerase_deHydtase"/>
</dbReference>
<dbReference type="InterPro" id="IPR005793">
    <property type="entry name" value="Formyl_trans_C"/>
</dbReference>
<dbReference type="InterPro" id="IPR002376">
    <property type="entry name" value="Formyl_transf_N"/>
</dbReference>
<dbReference type="InterPro" id="IPR036477">
    <property type="entry name" value="Formyl_transf_N_sf"/>
</dbReference>
<dbReference type="InterPro" id="IPR011034">
    <property type="entry name" value="Formyl_transferase-like_C_sf"/>
</dbReference>
<dbReference type="InterPro" id="IPR050177">
    <property type="entry name" value="Lipid_A_modif_metabolic_enz"/>
</dbReference>
<dbReference type="InterPro" id="IPR036291">
    <property type="entry name" value="NAD(P)-bd_dom_sf"/>
</dbReference>
<dbReference type="NCBIfam" id="NF005414">
    <property type="entry name" value="PRK06988.1"/>
    <property type="match status" value="1"/>
</dbReference>
<dbReference type="NCBIfam" id="NF005998">
    <property type="entry name" value="PRK08125.1"/>
    <property type="match status" value="1"/>
</dbReference>
<dbReference type="NCBIfam" id="NF008872">
    <property type="entry name" value="PRK11908.1"/>
    <property type="match status" value="1"/>
</dbReference>
<dbReference type="PANTHER" id="PTHR43245">
    <property type="entry name" value="BIFUNCTIONAL POLYMYXIN RESISTANCE PROTEIN ARNA"/>
    <property type="match status" value="1"/>
</dbReference>
<dbReference type="PANTHER" id="PTHR43245:SF13">
    <property type="entry name" value="UDP-D-APIOSE_UDP-D-XYLOSE SYNTHASE 2"/>
    <property type="match status" value="1"/>
</dbReference>
<dbReference type="Pfam" id="PF01370">
    <property type="entry name" value="Epimerase"/>
    <property type="match status" value="1"/>
</dbReference>
<dbReference type="Pfam" id="PF02911">
    <property type="entry name" value="Formyl_trans_C"/>
    <property type="match status" value="1"/>
</dbReference>
<dbReference type="Pfam" id="PF00551">
    <property type="entry name" value="Formyl_trans_N"/>
    <property type="match status" value="1"/>
</dbReference>
<dbReference type="PIRSF" id="PIRSF036506">
    <property type="entry name" value="Bifun_polymyxin_resist_ArnA"/>
    <property type="match status" value="1"/>
</dbReference>
<dbReference type="SUPFAM" id="SSF50486">
    <property type="entry name" value="FMT C-terminal domain-like"/>
    <property type="match status" value="1"/>
</dbReference>
<dbReference type="SUPFAM" id="SSF53328">
    <property type="entry name" value="Formyltransferase"/>
    <property type="match status" value="1"/>
</dbReference>
<dbReference type="SUPFAM" id="SSF51735">
    <property type="entry name" value="NAD(P)-binding Rossmann-fold domains"/>
    <property type="match status" value="1"/>
</dbReference>
<reference key="1">
    <citation type="journal article" date="2006" name="J. Bacteriol.">
        <title>Complete genome sequence of Yersinia pestis strains Antiqua and Nepal516: evidence of gene reduction in an emerging pathogen.</title>
        <authorList>
            <person name="Chain P.S.G."/>
            <person name="Hu P."/>
            <person name="Malfatti S.A."/>
            <person name="Radnedge L."/>
            <person name="Larimer F."/>
            <person name="Vergez L.M."/>
            <person name="Worsham P."/>
            <person name="Chu M.C."/>
            <person name="Andersen G.L."/>
        </authorList>
    </citation>
    <scope>NUCLEOTIDE SEQUENCE [LARGE SCALE GENOMIC DNA]</scope>
    <source>
        <strain>Nepal516</strain>
    </source>
</reference>
<reference key="2">
    <citation type="submission" date="2009-04" db="EMBL/GenBank/DDBJ databases">
        <title>Yersinia pestis Nepal516A whole genome shotgun sequencing project.</title>
        <authorList>
            <person name="Plunkett G. III"/>
            <person name="Anderson B.D."/>
            <person name="Baumler D.J."/>
            <person name="Burland V."/>
            <person name="Cabot E.L."/>
            <person name="Glasner J.D."/>
            <person name="Mau B."/>
            <person name="Neeno-Eckwall E."/>
            <person name="Perna N.T."/>
            <person name="Munk A.C."/>
            <person name="Tapia R."/>
            <person name="Green L.D."/>
            <person name="Rogers Y.C."/>
            <person name="Detter J.C."/>
            <person name="Bruce D.C."/>
            <person name="Brettin T.S."/>
        </authorList>
    </citation>
    <scope>NUCLEOTIDE SEQUENCE [LARGE SCALE GENOMIC DNA]</scope>
    <source>
        <strain>Nepal516</strain>
    </source>
</reference>
<proteinExistence type="inferred from homology"/>